<gene>
    <name evidence="10" type="primary">nscA</name>
    <name type="ORF">ARB_00538</name>
</gene>
<keyword id="KW-0012">Acyltransferase</keyword>
<keyword id="KW-0511">Multifunctional enzyme</keyword>
<keyword id="KW-0596">Phosphopantetheine</keyword>
<keyword id="KW-0597">Phosphoprotein</keyword>
<keyword id="KW-1185">Reference proteome</keyword>
<keyword id="KW-0808">Transferase</keyword>
<comment type="function">
    <text evidence="2 3 11">Non-reducing polyketide synthase; part of the gene cluster that mediates the biosynthesis of neosartoricin B, a prenylated anthracenone that probably exhibits T-cell antiproliferative activity, suggestive of a physiological role as an immunosuppressive agent (PubMed:23758576). The non-reducing polyketide synthase nscA probably synthesizes and cyclizes the decaketide backbone (By similarity). The hydrolase nscB then mediates the product release through hydrolysis followed by spontaneous decarboxylation (By similarity). The prenyltransferase nscD catalyzes the addition of the dimethylallyl group to the aromatic C5 (By similarity). The FAD-dependent monooxygenase nscC is then responsible for the stereospecific hydroxylation at C2 (By similarity). Neosartoricin B can be converted into two additional compounds neosartoricins C and D (By similarity). Neosartoricin C is a spirocyclic compound that is cyclized through the attack of C3 hydroxyl on C14, followed by dehydration (By similarity). On the other hand, neosartoricin D is a further cyclized compound in which attack of C2 on C14 in neosartoricin C results in the formation of the acetal-containing dioxabicyclo-octanone ring (By similarity). Both of these compounds are novel and possibly represent related metabolites of the gene cluster (By similarity).</text>
</comment>
<comment type="cofactor">
    <cofactor evidence="1">
        <name>pantetheine 4'-phosphate</name>
        <dbReference type="ChEBI" id="CHEBI:47942"/>
    </cofactor>
    <text evidence="5">Binds 1 phosphopantetheine covalently.</text>
</comment>
<comment type="pathway">
    <text evidence="11">Secondary metabolite biosynthesis.</text>
</comment>
<comment type="domain">
    <text evidence="4">Multidomain protein; including a starter unit:ACP transacylase (SAT) that selects the starter unit; a ketosynthase (KS) that catalyzes repeated decarboxylative condensation to elongate the polyketide backbone; a malonyl-CoA:ACP transacylase (MAT) that selects and transfers the extender unit malonyl-CoA; a product template (PT) domain that controls the immediate cyclization regioselectivity of the reactive polyketide backbone; and an acyl-carrier protein (ACP) that serves as the tether of the growing and completed polyketide via its phosphopantetheinyl arm (By similarity).</text>
</comment>
<protein>
    <recommendedName>
        <fullName evidence="10">Non-reducing polyketide synthase nscA</fullName>
        <ecNumber evidence="11">2.3.1.-</ecNumber>
    </recommendedName>
    <alternativeName>
        <fullName evidence="10">Conidial yellow pigment biosynthesis polyketide synthase nscA</fullName>
    </alternativeName>
    <alternativeName>
        <fullName evidence="10">Neosartoricin B biosynthesis protein A</fullName>
    </alternativeName>
</protein>
<sequence>MDSTFRRVVFFSNEFPSDDLKELFRRLDQHSKDRRFRLLSIFLEESTAILKDEVSKLPRPLKELVPPFGSVLGLVDVDFRQGPLGAAMESSMLTILELGLFIGHYESEDTEWDLVPGESVLAGLSIGILAAAAVALSSGLSDVAKAGAEAVRVSFRLGVYVADISAKLEAPQSDGTLSSWAHVVTEMTEASVQDELKQFNTDTHSPELTKVFISAADKTSVSVSGPPSRIKAAFQHSPVLRYSKSLPLPVYDGLCHASHLYTQSDIDSIINSAESVILPDRSVRLALLSSKTGKPFIAKTASELFLEIGTELLTGTIYLDNVTAGIVRHLQPQSKEMSSWQIDSFRTSLVLRSIHSAVEAKISGEQRQLTRRDLVNWVNKDFGPRRPRSHASSKLAIVGMACRLPGGANDLDLFWKLLEEGRDTLTTVPPDRFDLNTHYDPTGKTENTTQTPYGNFIDRPGFFDAGFFNMSPREAEQTDPMQRLALVTAYEALEMAGVVPGRTPSTHPSRIGTFYGQASDDWRELNASQNISTYAVPGGERAFGNGRINYFFKFSGPSFNLDTACSSGLAAVQAACSALWAGEVDTAIAGGLNVITDPDNYCGLGNAHFLSKTGQCKVWDKDADGYCRADGIGSVVIKRLEDAEADNDNILAVVLGACTNHSAEAISITHPHAGAQKANYRQVLNQAGVNPIDVSYIELHGTGTQAGDAVESESVSDIFAPVTPRRRPDQRLYLGAVKSNIGHGEAAAGIASLLKALLVYQKNLIPMHIGIKSEINPTIPKDLERRNVGLAMQNTPWPRPAGKKRLAVVNSFGAHGGNTTLLLEDAPERVKIQGTEDRITHSVLLSAKSKKSLQANMESLLSYLDQYPETSLADLAYTTSSRRMHHNMRFGTSVSCISGLQKVLRSQLDNPNFASEVRPVPNEVPSVILAFTGQGAYYHGMGRELFAEFPYFRAQVQQLDRLAQRLGFPSVVPVIENSIEDTPSSPILTQLSVVILEIALARFWSLLGVSISAVIGHSLGEYAALAVAGVISATDAIYLVGRRAQLIEERCAQGSHSMLSVRAPEDAIQKMLAAEPETASIAYEVSCCNTNQDTVIGGLNGEINDIRRALEAKSIKCTILDVPYAFHTAQMNPILDDLEALAKAVPFKAPSIPVISPLLATVIYDVKSLNADYLRRATRETVDFAAAIEAAQDMGLVDSKTIWIDVGPHPICAGLVRSMIPSASAMSSCRRNEDSISTISKSLVALYLAGINPCWAEFFKPREGEYSLLHLPKYRWNEIDYWIPYIGTWTLDKAHLKHGTKPTTPFSVSMSRPSALRTSLVHQITAETVEATTAMLHTISDMQHPDFLEAIHGHTMNKCGVATSSIWSDMAFTVGEYLYRRLVPNTKDVHMNLTDVEVLHAQVASKTKGSVQPLVLRAHLNLSTNSMSLSWFNADGETGECAAESFASAMIRFEDPVAWRKEWARLAHLVRGRIEVLEQRASEGKASRLSKPLAYALFKNVVDYADRYRGMDSVVLDELEAMAEVTLVPERYGTWHTPPHWIDSVSHLAGLVMNGSDASNTRDYFFVTPGCDSFRLLKKLEPGARYRSYVRMFPLPEDPNMHGGDVYILQGEEIVGMVGMIRFRRVPRLLMDRFFSPPTTTSVPGPVPPLAGVTMKYHDIAQTAPVRPTPTPPIVLPNPVVSSTMASKAPEPAPLLATSSESSTPKESPIVTPAESERADPVDNNMISQCLRLMARETGLEVEALTADASFVQLGVDSLMSLVLSEKFRTELGVEIKSSLFLECPTIGEMTAWIEEYC</sequence>
<evidence type="ECO:0000250" key="1">
    <source>
        <dbReference type="UniProtKB" id="A0A0K0MCJ4"/>
    </source>
</evidence>
<evidence type="ECO:0000250" key="2">
    <source>
        <dbReference type="UniProtKB" id="A1D8I9"/>
    </source>
</evidence>
<evidence type="ECO:0000250" key="3">
    <source>
        <dbReference type="UniProtKB" id="F2S6Z9"/>
    </source>
</evidence>
<evidence type="ECO:0000250" key="4">
    <source>
        <dbReference type="UniProtKB" id="Q5B0D0"/>
    </source>
</evidence>
<evidence type="ECO:0000255" key="5"/>
<evidence type="ECO:0000255" key="6">
    <source>
        <dbReference type="PROSITE-ProRule" id="PRU00258"/>
    </source>
</evidence>
<evidence type="ECO:0000255" key="7">
    <source>
        <dbReference type="PROSITE-ProRule" id="PRU01348"/>
    </source>
</evidence>
<evidence type="ECO:0000255" key="8">
    <source>
        <dbReference type="PROSITE-ProRule" id="PRU01363"/>
    </source>
</evidence>
<evidence type="ECO:0000256" key="9">
    <source>
        <dbReference type="SAM" id="MobiDB-lite"/>
    </source>
</evidence>
<evidence type="ECO:0000303" key="10">
    <source>
    </source>
</evidence>
<evidence type="ECO:0000305" key="11">
    <source>
    </source>
</evidence>
<reference key="1">
    <citation type="journal article" date="2011" name="Genome Biol.">
        <title>Comparative and functional genomics provide insights into the pathogenicity of dermatophytic fungi.</title>
        <authorList>
            <person name="Burmester A."/>
            <person name="Shelest E."/>
            <person name="Gloeckner G."/>
            <person name="Heddergott C."/>
            <person name="Schindler S."/>
            <person name="Staib P."/>
            <person name="Heidel A."/>
            <person name="Felder M."/>
            <person name="Petzold A."/>
            <person name="Szafranski K."/>
            <person name="Feuermann M."/>
            <person name="Pedruzzi I."/>
            <person name="Priebe S."/>
            <person name="Groth M."/>
            <person name="Winkler R."/>
            <person name="Li W."/>
            <person name="Kniemeyer O."/>
            <person name="Schroeckh V."/>
            <person name="Hertweck C."/>
            <person name="Hube B."/>
            <person name="White T.C."/>
            <person name="Platzer M."/>
            <person name="Guthke R."/>
            <person name="Heitman J."/>
            <person name="Woestemeyer J."/>
            <person name="Zipfel P.F."/>
            <person name="Monod M."/>
            <person name="Brakhage A.A."/>
        </authorList>
    </citation>
    <scope>NUCLEOTIDE SEQUENCE [LARGE SCALE GENOMIC DNA]</scope>
    <source>
        <strain>ATCC MYA-4681 / CBS 112371</strain>
    </source>
</reference>
<reference key="2">
    <citation type="journal article" date="2013" name="ACS Synth. Biol.">
        <title>Discovery of cryptic polyketide metabolites from dermatophytes using heterologous expression in Aspergillus nidulans.</title>
        <authorList>
            <person name="Yin W.B."/>
            <person name="Chooi Y.H."/>
            <person name="Smith A.R."/>
            <person name="Cacho R.A."/>
            <person name="Hu Y."/>
            <person name="White T.C."/>
            <person name="Tang Y."/>
        </authorList>
    </citation>
    <scope>FUNCTION</scope>
</reference>
<dbReference type="EC" id="2.3.1.-" evidence="11"/>
<dbReference type="EMBL" id="ABSU01000014">
    <property type="protein sequence ID" value="EFE32713.1"/>
    <property type="molecule type" value="Genomic_DNA"/>
</dbReference>
<dbReference type="RefSeq" id="XP_003013353.1">
    <property type="nucleotide sequence ID" value="XM_003013307.1"/>
</dbReference>
<dbReference type="SMR" id="D4AWH3"/>
<dbReference type="STRING" id="663331.D4AWH3"/>
<dbReference type="GeneID" id="9519388"/>
<dbReference type="KEGG" id="abe:ARB_00538"/>
<dbReference type="eggNOG" id="KOG1202">
    <property type="taxonomic scope" value="Eukaryota"/>
</dbReference>
<dbReference type="HOGENOM" id="CLU_000022_6_1_1"/>
<dbReference type="OMA" id="LNTHYDP"/>
<dbReference type="OrthoDB" id="329835at2759"/>
<dbReference type="Proteomes" id="UP000008866">
    <property type="component" value="Unassembled WGS sequence"/>
</dbReference>
<dbReference type="GO" id="GO:0004315">
    <property type="term" value="F:3-oxoacyl-[acyl-carrier-protein] synthase activity"/>
    <property type="evidence" value="ECO:0007669"/>
    <property type="project" value="InterPro"/>
</dbReference>
<dbReference type="GO" id="GO:0004312">
    <property type="term" value="F:fatty acid synthase activity"/>
    <property type="evidence" value="ECO:0007669"/>
    <property type="project" value="TreeGrafter"/>
</dbReference>
<dbReference type="GO" id="GO:0031177">
    <property type="term" value="F:phosphopantetheine binding"/>
    <property type="evidence" value="ECO:0007669"/>
    <property type="project" value="InterPro"/>
</dbReference>
<dbReference type="GO" id="GO:0006633">
    <property type="term" value="P:fatty acid biosynthetic process"/>
    <property type="evidence" value="ECO:0007669"/>
    <property type="project" value="InterPro"/>
</dbReference>
<dbReference type="GO" id="GO:0044550">
    <property type="term" value="P:secondary metabolite biosynthetic process"/>
    <property type="evidence" value="ECO:0007669"/>
    <property type="project" value="TreeGrafter"/>
</dbReference>
<dbReference type="CDD" id="cd00833">
    <property type="entry name" value="PKS"/>
    <property type="match status" value="1"/>
</dbReference>
<dbReference type="FunFam" id="3.40.366.10:FF:000017">
    <property type="entry name" value="Non-reducing polyketide synthase aptA"/>
    <property type="match status" value="1"/>
</dbReference>
<dbReference type="FunFam" id="3.40.366.10:FF:000002">
    <property type="entry name" value="Probable polyketide synthase 2"/>
    <property type="match status" value="1"/>
</dbReference>
<dbReference type="FunFam" id="1.10.1200.10:FF:000011">
    <property type="entry name" value="Sterigmatocystin biosynthesis polyketide synthase"/>
    <property type="match status" value="1"/>
</dbReference>
<dbReference type="FunFam" id="3.10.129.110:FF:000001">
    <property type="entry name" value="Sterigmatocystin biosynthesis polyketide synthase"/>
    <property type="match status" value="1"/>
</dbReference>
<dbReference type="FunFam" id="3.40.47.10:FF:000031">
    <property type="entry name" value="Sterigmatocystin biosynthesis polyketide synthase"/>
    <property type="match status" value="1"/>
</dbReference>
<dbReference type="Gene3D" id="3.30.70.3290">
    <property type="match status" value="1"/>
</dbReference>
<dbReference type="Gene3D" id="3.40.47.10">
    <property type="match status" value="1"/>
</dbReference>
<dbReference type="Gene3D" id="1.10.1200.10">
    <property type="entry name" value="ACP-like"/>
    <property type="match status" value="1"/>
</dbReference>
<dbReference type="Gene3D" id="3.40.366.10">
    <property type="entry name" value="Malonyl-Coenzyme A Acyl Carrier Protein, domain 2"/>
    <property type="match status" value="2"/>
</dbReference>
<dbReference type="Gene3D" id="3.10.129.110">
    <property type="entry name" value="Polyketide synthase dehydratase"/>
    <property type="match status" value="1"/>
</dbReference>
<dbReference type="InterPro" id="IPR001227">
    <property type="entry name" value="Ac_transferase_dom_sf"/>
</dbReference>
<dbReference type="InterPro" id="IPR036736">
    <property type="entry name" value="ACP-like_sf"/>
</dbReference>
<dbReference type="InterPro" id="IPR014043">
    <property type="entry name" value="Acyl_transferase_dom"/>
</dbReference>
<dbReference type="InterPro" id="IPR016035">
    <property type="entry name" value="Acyl_Trfase/lysoPLipase"/>
</dbReference>
<dbReference type="InterPro" id="IPR018201">
    <property type="entry name" value="Ketoacyl_synth_AS"/>
</dbReference>
<dbReference type="InterPro" id="IPR014031">
    <property type="entry name" value="Ketoacyl_synth_C"/>
</dbReference>
<dbReference type="InterPro" id="IPR014030">
    <property type="entry name" value="Ketoacyl_synth_N"/>
</dbReference>
<dbReference type="InterPro" id="IPR020841">
    <property type="entry name" value="PKS_Beta-ketoAc_synthase_dom"/>
</dbReference>
<dbReference type="InterPro" id="IPR042104">
    <property type="entry name" value="PKS_dehydratase_sf"/>
</dbReference>
<dbReference type="InterPro" id="IPR049900">
    <property type="entry name" value="PKS_mFAS_DH"/>
</dbReference>
<dbReference type="InterPro" id="IPR050091">
    <property type="entry name" value="PKS_NRPS_Biosynth_Enz"/>
</dbReference>
<dbReference type="InterPro" id="IPR020806">
    <property type="entry name" value="PKS_PP-bd"/>
</dbReference>
<dbReference type="InterPro" id="IPR009081">
    <property type="entry name" value="PP-bd_ACP"/>
</dbReference>
<dbReference type="InterPro" id="IPR030918">
    <property type="entry name" value="PT_fungal_PKS"/>
</dbReference>
<dbReference type="InterPro" id="IPR032088">
    <property type="entry name" value="SAT"/>
</dbReference>
<dbReference type="InterPro" id="IPR016039">
    <property type="entry name" value="Thiolase-like"/>
</dbReference>
<dbReference type="NCBIfam" id="TIGR04532">
    <property type="entry name" value="PT_fungal_PKS"/>
    <property type="match status" value="1"/>
</dbReference>
<dbReference type="PANTHER" id="PTHR43775">
    <property type="entry name" value="FATTY ACID SYNTHASE"/>
    <property type="match status" value="1"/>
</dbReference>
<dbReference type="PANTHER" id="PTHR43775:SF24">
    <property type="entry name" value="NON-REDUCING POLYKETIDE SYNTHASE APTA-RELATED"/>
    <property type="match status" value="1"/>
</dbReference>
<dbReference type="Pfam" id="PF00698">
    <property type="entry name" value="Acyl_transf_1"/>
    <property type="match status" value="1"/>
</dbReference>
<dbReference type="Pfam" id="PF22621">
    <property type="entry name" value="CurL-like_PKS_C"/>
    <property type="match status" value="1"/>
</dbReference>
<dbReference type="Pfam" id="PF00109">
    <property type="entry name" value="ketoacyl-synt"/>
    <property type="match status" value="1"/>
</dbReference>
<dbReference type="Pfam" id="PF02801">
    <property type="entry name" value="Ketoacyl-synt_C"/>
    <property type="match status" value="1"/>
</dbReference>
<dbReference type="Pfam" id="PF00550">
    <property type="entry name" value="PP-binding"/>
    <property type="match status" value="1"/>
</dbReference>
<dbReference type="Pfam" id="PF16073">
    <property type="entry name" value="SAT"/>
    <property type="match status" value="1"/>
</dbReference>
<dbReference type="SMART" id="SM00827">
    <property type="entry name" value="PKS_AT"/>
    <property type="match status" value="1"/>
</dbReference>
<dbReference type="SMART" id="SM00825">
    <property type="entry name" value="PKS_KS"/>
    <property type="match status" value="1"/>
</dbReference>
<dbReference type="SMART" id="SM00823">
    <property type="entry name" value="PKS_PP"/>
    <property type="match status" value="1"/>
</dbReference>
<dbReference type="SUPFAM" id="SSF47336">
    <property type="entry name" value="ACP-like"/>
    <property type="match status" value="1"/>
</dbReference>
<dbReference type="SUPFAM" id="SSF52151">
    <property type="entry name" value="FabD/lysophospholipase-like"/>
    <property type="match status" value="1"/>
</dbReference>
<dbReference type="SUPFAM" id="SSF53901">
    <property type="entry name" value="Thiolase-like"/>
    <property type="match status" value="1"/>
</dbReference>
<dbReference type="PROSITE" id="PS50075">
    <property type="entry name" value="CARRIER"/>
    <property type="match status" value="1"/>
</dbReference>
<dbReference type="PROSITE" id="PS00606">
    <property type="entry name" value="KS3_1"/>
    <property type="match status" value="1"/>
</dbReference>
<dbReference type="PROSITE" id="PS52004">
    <property type="entry name" value="KS3_2"/>
    <property type="match status" value="1"/>
</dbReference>
<dbReference type="PROSITE" id="PS52019">
    <property type="entry name" value="PKS_MFAS_DH"/>
    <property type="match status" value="1"/>
</dbReference>
<proteinExistence type="inferred from homology"/>
<accession>D4AWH3</accession>
<name>NSCA_ARTBC</name>
<feature type="chain" id="PRO_0000437892" description="Non-reducing polyketide synthase nscA">
    <location>
        <begin position="1"/>
        <end position="1798"/>
    </location>
</feature>
<feature type="domain" description="Ketosynthase family 3 (KS3)" evidence="7">
    <location>
        <begin position="392"/>
        <end position="825"/>
    </location>
</feature>
<feature type="domain" description="PKS/mFAS DH" evidence="8">
    <location>
        <begin position="1322"/>
        <end position="1632"/>
    </location>
</feature>
<feature type="domain" description="Carrier" evidence="6">
    <location>
        <begin position="1721"/>
        <end position="1798"/>
    </location>
</feature>
<feature type="region of interest" description="N-terminal acylcarrier protein transacylase domain (SAT)" evidence="5">
    <location>
        <begin position="25"/>
        <end position="256"/>
    </location>
</feature>
<feature type="region of interest" description="Disordered" evidence="9">
    <location>
        <begin position="436"/>
        <end position="455"/>
    </location>
</feature>
<feature type="region of interest" description="Malonyl-CoA:ACP transacylase (MAT) domain" evidence="5">
    <location>
        <begin position="931"/>
        <end position="1230"/>
    </location>
</feature>
<feature type="region of interest" description="N-terminal hotdog fold" evidence="8">
    <location>
        <begin position="1322"/>
        <end position="1458"/>
    </location>
</feature>
<feature type="region of interest" description="Product template (PT) domain" evidence="5">
    <location>
        <begin position="1390"/>
        <end position="1628"/>
    </location>
</feature>
<feature type="region of interest" description="C-terminal hotdog fold" evidence="8">
    <location>
        <begin position="1486"/>
        <end position="1632"/>
    </location>
</feature>
<feature type="region of interest" description="Disordered" evidence="9">
    <location>
        <begin position="1685"/>
        <end position="1719"/>
    </location>
</feature>
<feature type="compositionally biased region" description="Polar residues" evidence="9">
    <location>
        <begin position="444"/>
        <end position="453"/>
    </location>
</feature>
<feature type="compositionally biased region" description="Low complexity" evidence="9">
    <location>
        <begin position="1698"/>
        <end position="1709"/>
    </location>
</feature>
<feature type="active site" description="For beta-ketoacyl synthase activity" evidence="7">
    <location>
        <position position="565"/>
    </location>
</feature>
<feature type="active site" description="For beta-ketoacyl synthase activity" evidence="7">
    <location>
        <position position="700"/>
    </location>
</feature>
<feature type="active site" description="For beta-ketoacyl synthase activity" evidence="7">
    <location>
        <position position="743"/>
    </location>
</feature>
<feature type="active site" description="Proton acceptor; for dehydratase activity" evidence="8">
    <location>
        <position position="1354"/>
    </location>
</feature>
<feature type="active site" description="Proton donor; for dehydratase activity" evidence="8">
    <location>
        <position position="1543"/>
    </location>
</feature>
<feature type="modified residue" description="O-(pantetheine 4'-phosphoryl)serine" evidence="6">
    <location>
        <position position="1758"/>
    </location>
</feature>
<organism>
    <name type="scientific">Arthroderma benhamiae (strain ATCC MYA-4681 / CBS 112371)</name>
    <name type="common">Trichophyton mentagrophytes</name>
    <dbReference type="NCBI Taxonomy" id="663331"/>
    <lineage>
        <taxon>Eukaryota</taxon>
        <taxon>Fungi</taxon>
        <taxon>Dikarya</taxon>
        <taxon>Ascomycota</taxon>
        <taxon>Pezizomycotina</taxon>
        <taxon>Eurotiomycetes</taxon>
        <taxon>Eurotiomycetidae</taxon>
        <taxon>Onygenales</taxon>
        <taxon>Arthrodermataceae</taxon>
        <taxon>Trichophyton</taxon>
    </lineage>
</organism>